<proteinExistence type="evidence at transcript level"/>
<protein>
    <recommendedName>
        <fullName evidence="8">Phospho-2-dehydro-3-deoxyheptonate aldolase 1, chloroplastic</fullName>
        <ecNumber evidence="1">2.5.1.54</ecNumber>
    </recommendedName>
    <alternativeName>
        <fullName evidence="6 7">3-deoxy-D-arabino-heptulosonate 7-phosphate synthase 1</fullName>
        <shortName evidence="8">DAHP synthase 1</shortName>
        <shortName evidence="7">PhDAHP1</shortName>
    </alternativeName>
    <alternativeName>
        <fullName evidence="8">Phospho-2-keto-3-deoxyheptonate aldolase 1</fullName>
    </alternativeName>
</protein>
<organism>
    <name type="scientific">Petunia hybrida</name>
    <name type="common">Petunia</name>
    <dbReference type="NCBI Taxonomy" id="4102"/>
    <lineage>
        <taxon>Eukaryota</taxon>
        <taxon>Viridiplantae</taxon>
        <taxon>Streptophyta</taxon>
        <taxon>Embryophyta</taxon>
        <taxon>Tracheophyta</taxon>
        <taxon>Spermatophyta</taxon>
        <taxon>Magnoliopsida</taxon>
        <taxon>eudicotyledons</taxon>
        <taxon>Gunneridae</taxon>
        <taxon>Pentapetalae</taxon>
        <taxon>asterids</taxon>
        <taxon>lamiids</taxon>
        <taxon>Solanales</taxon>
        <taxon>Solanaceae</taxon>
        <taxon>Petunioideae</taxon>
        <taxon>Petunia</taxon>
    </lineage>
</organism>
<reference key="1">
    <citation type="journal article" date="2014" name="Phytochemistry">
        <title>PhDAHP1 is required for floral volatile benzenoid/phenylpropanoid biosynthesis in Petunia x hybrida cv 'Mitchell Diploid'.</title>
        <authorList>
            <person name="Langer K.M."/>
            <person name="Jones C.R."/>
            <person name="Jaworski E.A."/>
            <person name="Rushing G.V."/>
            <person name="Kim J.Y."/>
            <person name="Clark D.G."/>
            <person name="Colquhoun T.A."/>
        </authorList>
    </citation>
    <scope>NUCLEOTIDE SEQUENCE [MRNA]</scope>
    <scope>FUNCTION</scope>
    <scope>DISRUPTION PHENOTYPE</scope>
    <scope>TISSUE SPECIFICITY</scope>
    <scope>DEVELOPMENTAL STAGE</scope>
    <scope>SUBCELLULAR LOCATION</scope>
    <source>
        <strain>cv. Mitchell</strain>
        <tissue>Corolla</tissue>
        <tissue>Leaf</tissue>
    </source>
</reference>
<reference key="2">
    <citation type="journal article" date="2012" name="Plant Cell">
        <title>The R2R3-MYB-like regulatory factor EOBI, acting downstream of EOBII, regulates scent production by activating ODO1 and structural scent-related genes in petunia.</title>
        <authorList>
            <person name="Spitzer-Rimon B."/>
            <person name="Farhi M."/>
            <person name="Albo B."/>
            <person name="Cna'ani A."/>
            <person name="Ben Zvi M.M."/>
            <person name="Masci T."/>
            <person name="Edelbaum O."/>
            <person name="Yu Y."/>
            <person name="Shklarman E."/>
            <person name="Ovadis M."/>
            <person name="Vainstein A."/>
        </authorList>
    </citation>
    <scope>INDUCTION BY EOBI</scope>
    <source>
        <strain>cv. W115</strain>
    </source>
</reference>
<evidence type="ECO:0000250" key="1">
    <source>
        <dbReference type="UniProtKB" id="O53512"/>
    </source>
</evidence>
<evidence type="ECO:0000255" key="2"/>
<evidence type="ECO:0000256" key="3">
    <source>
        <dbReference type="SAM" id="MobiDB-lite"/>
    </source>
</evidence>
<evidence type="ECO:0000269" key="4">
    <source>
    </source>
</evidence>
<evidence type="ECO:0000269" key="5">
    <source>
    </source>
</evidence>
<evidence type="ECO:0000303" key="6">
    <source>
    </source>
</evidence>
<evidence type="ECO:0000303" key="7">
    <source>
    </source>
</evidence>
<evidence type="ECO:0000305" key="8"/>
<feature type="transit peptide" description="Chloroplast" evidence="2">
    <location>
        <begin position="1"/>
        <end position="57"/>
    </location>
</feature>
<feature type="chain" id="PRO_0000451509" description="Phospho-2-dehydro-3-deoxyheptonate aldolase 1, chloroplastic">
    <location>
        <begin position="58"/>
        <end position="533"/>
    </location>
</feature>
<feature type="region of interest" description="Disordered" evidence="3">
    <location>
        <begin position="47"/>
        <end position="70"/>
    </location>
</feature>
<feature type="compositionally biased region" description="Polar residues" evidence="3">
    <location>
        <begin position="47"/>
        <end position="56"/>
    </location>
</feature>
<feature type="compositionally biased region" description="Low complexity" evidence="3">
    <location>
        <begin position="57"/>
        <end position="70"/>
    </location>
</feature>
<feature type="binding site" evidence="1">
    <location>
        <position position="145"/>
    </location>
    <ligand>
        <name>Mn(2+)</name>
        <dbReference type="ChEBI" id="CHEBI:29035"/>
    </ligand>
</feature>
<feature type="binding site" evidence="1">
    <location>
        <position position="184"/>
    </location>
    <ligand>
        <name>substrate</name>
    </ligand>
</feature>
<feature type="binding site" evidence="1">
    <location>
        <begin position="343"/>
        <end position="344"/>
    </location>
    <ligand>
        <name>substrate</name>
    </ligand>
</feature>
<feature type="binding site" evidence="1">
    <location>
        <position position="366"/>
    </location>
    <ligand>
        <name>substrate</name>
    </ligand>
</feature>
<feature type="binding site" evidence="1">
    <location>
        <position position="397"/>
    </location>
    <ligand>
        <name>substrate</name>
    </ligand>
</feature>
<feature type="binding site" evidence="1">
    <location>
        <position position="429"/>
    </location>
    <ligand>
        <name>Mn(2+)</name>
        <dbReference type="ChEBI" id="CHEBI:29035"/>
    </ligand>
</feature>
<feature type="binding site" evidence="1">
    <location>
        <position position="471"/>
    </location>
    <ligand>
        <name>Mn(2+)</name>
        <dbReference type="ChEBI" id="CHEBI:29035"/>
    </ligand>
</feature>
<feature type="binding site" evidence="1">
    <location>
        <position position="501"/>
    </location>
    <ligand>
        <name>Mn(2+)</name>
        <dbReference type="ChEBI" id="CHEBI:29035"/>
    </ligand>
</feature>
<accession>A0A067XH53</accession>
<sequence length="533" mass="58894">MALSTNSTTSSLLPKTPLVQQPLLKNASLPTTTKAIRFIQPISAIHSSDSSKNTPIVSAKPSSPPAATSTAAATAVTKQEWSIDSWKTKKALQLPEYPNQEELKNVLKTIEDFPPIVFAGEARHLEEKLGEAAMGRAFLLQGGDCAESFKEFNANNIRDTFRILLQMGAVLMFGGQMPVIKVGRMAGQFAKPRSDNFEEKNGVKLPSYRGDNVNGDAFDLKSRTPDPQRLIRAYCQSAATLNLLRAFATGGYAAMQRVTQWNLDFTEHSEQGDRYRELANRVDEALGFMNAAGLTTDHPIMTTTEFWTSHECLLLPYEQSLTRLDSTSGLYYDCSAHFLWVGERTRQLDGAHVEFLRGIANPLGIKVSDKMDPSALVKLIEILNPQNKAGRITIITRMGAENMRVKLPHLIRAVRGAGQIVTWVSDPMHGNTIKAPCGLKTRPFDSIRAEVRAFFDVHEQEGSHPGGVHLEMTGQNVTECIGGSRTVTFDDLSSRYHTHCDPRLNASQSLELAFIIAERLRKRRLGSQSVLGQ</sequence>
<comment type="function">
    <text evidence="1 5">Involved in the production of volatile organic compounds (VOCs), including floral volatile benzenoids and phenylpropanoids (FVBP), in flowers of fragrant cultivars (e.g. cv. Mitchell and cv. V26), scent attracting pollinators (e.g. the night-active hawkmoth pollinator Manduca sexta) (PubMed:24815009). Catalyzes an aldol-like condensation reaction between phosphoenolpyruvate (PEP) and D-erythrose 4-phosphate (E4P) to generate 3-deoxy-D-arabino-heptulosonate 7-phosphate (DAH7P) and inorganic phosphate (By similarity).</text>
</comment>
<comment type="catalytic activity">
    <reaction evidence="1">
        <text>D-erythrose 4-phosphate + phosphoenolpyruvate + H2O = 7-phospho-2-dehydro-3-deoxy-D-arabino-heptonate + phosphate</text>
        <dbReference type="Rhea" id="RHEA:14717"/>
        <dbReference type="ChEBI" id="CHEBI:15377"/>
        <dbReference type="ChEBI" id="CHEBI:16897"/>
        <dbReference type="ChEBI" id="CHEBI:43474"/>
        <dbReference type="ChEBI" id="CHEBI:58394"/>
        <dbReference type="ChEBI" id="CHEBI:58702"/>
        <dbReference type="EC" id="2.5.1.54"/>
    </reaction>
</comment>
<comment type="cofactor">
    <cofactor evidence="1">
        <name>Mn(2+)</name>
        <dbReference type="ChEBI" id="CHEBI:29035"/>
    </cofactor>
    <text evidence="1">Binds 1 divalent metal cation per subunit that could be manganese.</text>
</comment>
<comment type="pathway">
    <text evidence="1">Metabolic intermediate biosynthesis; chorismate biosynthesis; chorismate from D-erythrose 4-phosphate and phosphoenolpyruvate: step 1/7.</text>
</comment>
<comment type="subunit">
    <text evidence="1">Homodimer.</text>
</comment>
<comment type="subcellular location">
    <subcellularLocation>
        <location evidence="5">Plastid</location>
        <location evidence="5">Chloroplast</location>
    </subcellularLocation>
</comment>
<comment type="tissue specificity">
    <text evidence="5">Mostly expressed in flowers, especially in petal limbs and tubes, and, to a lower extent, in roots, stems, stigmas, anthers, leaves and sepals.</text>
</comment>
<comment type="developmental stage">
    <text evidence="5">During floral development, accumulates to highest levels during open flower stages.</text>
</comment>
<comment type="induction">
    <text evidence="4">Triggered by EOBI in flowers.</text>
</comment>
<comment type="disruption phenotype">
    <text evidence="5">Reduced floral volatile benzenoids and phenylpropanoids (FVBP) emission.</text>
</comment>
<comment type="similarity">
    <text evidence="8">Belongs to the class-II DAHP synthase family.</text>
</comment>
<gene>
    <name evidence="7" type="primary">DAHP1</name>
    <name evidence="6" type="synonym">DAHPS</name>
    <name evidence="7" type="synonym">DHS1</name>
</gene>
<name>AROG1_PETHY</name>
<dbReference type="EC" id="2.5.1.54" evidence="1"/>
<dbReference type="EMBL" id="JQ955569">
    <property type="protein sequence ID" value="AFL02467.1"/>
    <property type="molecule type" value="mRNA"/>
</dbReference>
<dbReference type="SMR" id="A0A067XH53"/>
<dbReference type="UniPathway" id="UPA00053">
    <property type="reaction ID" value="UER00084"/>
</dbReference>
<dbReference type="GO" id="GO:0009507">
    <property type="term" value="C:chloroplast"/>
    <property type="evidence" value="ECO:0000314"/>
    <property type="project" value="UniProtKB"/>
</dbReference>
<dbReference type="GO" id="GO:0003849">
    <property type="term" value="F:3-deoxy-7-phosphoheptulonate synthase activity"/>
    <property type="evidence" value="ECO:0007669"/>
    <property type="project" value="UniProtKB-EC"/>
</dbReference>
<dbReference type="GO" id="GO:0046872">
    <property type="term" value="F:metal ion binding"/>
    <property type="evidence" value="ECO:0007669"/>
    <property type="project" value="UniProtKB-KW"/>
</dbReference>
<dbReference type="GO" id="GO:0008652">
    <property type="term" value="P:amino acid biosynthetic process"/>
    <property type="evidence" value="ECO:0007669"/>
    <property type="project" value="UniProtKB-KW"/>
</dbReference>
<dbReference type="GO" id="GO:0009073">
    <property type="term" value="P:aromatic amino acid family biosynthetic process"/>
    <property type="evidence" value="ECO:0007669"/>
    <property type="project" value="UniProtKB-KW"/>
</dbReference>
<dbReference type="GO" id="GO:0009423">
    <property type="term" value="P:chorismate biosynthetic process"/>
    <property type="evidence" value="ECO:0007669"/>
    <property type="project" value="UniProtKB-UniPathway"/>
</dbReference>
<dbReference type="GO" id="GO:0010597">
    <property type="term" value="P:green leaf volatile biosynthetic process"/>
    <property type="evidence" value="ECO:0000315"/>
    <property type="project" value="UniProtKB"/>
</dbReference>
<dbReference type="FunFam" id="3.20.20.70:FF:000128">
    <property type="entry name" value="Phospho-2-dehydro-3-deoxyheptonate aldolase"/>
    <property type="match status" value="1"/>
</dbReference>
<dbReference type="Gene3D" id="3.20.20.70">
    <property type="entry name" value="Aldolase class I"/>
    <property type="match status" value="1"/>
</dbReference>
<dbReference type="InterPro" id="IPR013785">
    <property type="entry name" value="Aldolase_TIM"/>
</dbReference>
<dbReference type="InterPro" id="IPR002480">
    <property type="entry name" value="DAHP_synth_2"/>
</dbReference>
<dbReference type="NCBIfam" id="TIGR01358">
    <property type="entry name" value="DAHP_synth_II"/>
    <property type="match status" value="1"/>
</dbReference>
<dbReference type="PANTHER" id="PTHR21337:SF0">
    <property type="entry name" value="PHOSPHO-2-DEHYDRO-3-DEOXYHEPTONATE ALDOLASE"/>
    <property type="match status" value="1"/>
</dbReference>
<dbReference type="PANTHER" id="PTHR21337">
    <property type="entry name" value="PHOSPHO-2-DEHYDRO-3-DEOXYHEPTONATE ALDOLASE 1, 2"/>
    <property type="match status" value="1"/>
</dbReference>
<dbReference type="Pfam" id="PF01474">
    <property type="entry name" value="DAHP_synth_2"/>
    <property type="match status" value="1"/>
</dbReference>
<dbReference type="SUPFAM" id="SSF51569">
    <property type="entry name" value="Aldolase"/>
    <property type="match status" value="1"/>
</dbReference>
<keyword id="KW-0028">Amino-acid biosynthesis</keyword>
<keyword id="KW-0057">Aromatic amino acid biosynthesis</keyword>
<keyword id="KW-0150">Chloroplast</keyword>
<keyword id="KW-0464">Manganese</keyword>
<keyword id="KW-0479">Metal-binding</keyword>
<keyword id="KW-0934">Plastid</keyword>
<keyword id="KW-0808">Transferase</keyword>
<keyword id="KW-0809">Transit peptide</keyword>